<dbReference type="EMBL" id="CR859726">
    <property type="protein sequence ID" value="CAH91885.1"/>
    <property type="molecule type" value="mRNA"/>
</dbReference>
<dbReference type="RefSeq" id="NP_001128976.1">
    <property type="nucleotide sequence ID" value="NM_001135504.1"/>
</dbReference>
<dbReference type="SMR" id="Q5R8M5"/>
<dbReference type="FunCoup" id="Q5R8M5">
    <property type="interactions" value="476"/>
</dbReference>
<dbReference type="STRING" id="9601.ENSPPYP00000011956"/>
<dbReference type="GeneID" id="100190816"/>
<dbReference type="KEGG" id="pon:100190816"/>
<dbReference type="CTD" id="55612"/>
<dbReference type="eggNOG" id="KOG3727">
    <property type="taxonomic scope" value="Eukaryota"/>
</dbReference>
<dbReference type="InParanoid" id="Q5R8M5"/>
<dbReference type="OrthoDB" id="10057618at2759"/>
<dbReference type="Proteomes" id="UP000001595">
    <property type="component" value="Unplaced"/>
</dbReference>
<dbReference type="GO" id="GO:0030054">
    <property type="term" value="C:cell junction"/>
    <property type="evidence" value="ECO:0000250"/>
    <property type="project" value="UniProtKB"/>
</dbReference>
<dbReference type="GO" id="GO:0005856">
    <property type="term" value="C:cytoskeleton"/>
    <property type="evidence" value="ECO:0007669"/>
    <property type="project" value="UniProtKB-SubCell"/>
</dbReference>
<dbReference type="GO" id="GO:0005829">
    <property type="term" value="C:cytosol"/>
    <property type="evidence" value="ECO:0000250"/>
    <property type="project" value="UniProtKB"/>
</dbReference>
<dbReference type="GO" id="GO:0005925">
    <property type="term" value="C:focal adhesion"/>
    <property type="evidence" value="ECO:0007669"/>
    <property type="project" value="UniProtKB-SubCell"/>
</dbReference>
<dbReference type="GO" id="GO:0032587">
    <property type="term" value="C:ruffle membrane"/>
    <property type="evidence" value="ECO:0007669"/>
    <property type="project" value="UniProtKB-SubCell"/>
</dbReference>
<dbReference type="GO" id="GO:0005178">
    <property type="term" value="F:integrin binding"/>
    <property type="evidence" value="ECO:0007669"/>
    <property type="project" value="TreeGrafter"/>
</dbReference>
<dbReference type="GO" id="GO:0007155">
    <property type="term" value="P:cell adhesion"/>
    <property type="evidence" value="ECO:0000250"/>
    <property type="project" value="UniProtKB"/>
</dbReference>
<dbReference type="GO" id="GO:0007160">
    <property type="term" value="P:cell-matrix adhesion"/>
    <property type="evidence" value="ECO:0007669"/>
    <property type="project" value="TreeGrafter"/>
</dbReference>
<dbReference type="GO" id="GO:0090162">
    <property type="term" value="P:establishment of epithelial cell polarity"/>
    <property type="evidence" value="ECO:0000250"/>
    <property type="project" value="UniProtKB"/>
</dbReference>
<dbReference type="GO" id="GO:0007229">
    <property type="term" value="P:integrin-mediated signaling pathway"/>
    <property type="evidence" value="ECO:0007669"/>
    <property type="project" value="InterPro"/>
</dbReference>
<dbReference type="GO" id="GO:0051546">
    <property type="term" value="P:keratinocyte migration"/>
    <property type="evidence" value="ECO:0000250"/>
    <property type="project" value="UniProtKB"/>
</dbReference>
<dbReference type="GO" id="GO:0043616">
    <property type="term" value="P:keratinocyte proliferation"/>
    <property type="evidence" value="ECO:0000250"/>
    <property type="project" value="UniProtKB"/>
</dbReference>
<dbReference type="CDD" id="cd14473">
    <property type="entry name" value="FERM_B-lobe"/>
    <property type="match status" value="1"/>
</dbReference>
<dbReference type="CDD" id="cd13205">
    <property type="entry name" value="FERM_C_fermitin"/>
    <property type="match status" value="1"/>
</dbReference>
<dbReference type="CDD" id="cd17180">
    <property type="entry name" value="FERM_F0_KIND1"/>
    <property type="match status" value="1"/>
</dbReference>
<dbReference type="CDD" id="cd01237">
    <property type="entry name" value="PH_fermitin"/>
    <property type="match status" value="1"/>
</dbReference>
<dbReference type="FunFam" id="2.30.29.30:FF:000037">
    <property type="entry name" value="Fermitin family homolog 2"/>
    <property type="match status" value="1"/>
</dbReference>
<dbReference type="FunFam" id="2.30.29.30:FF:000057">
    <property type="entry name" value="Fermitin family homolog 2 (Drosophila)"/>
    <property type="match status" value="1"/>
</dbReference>
<dbReference type="FunFam" id="3.10.20.90:FF:000035">
    <property type="entry name" value="Fermitin family homolog 2 (Drosophila)"/>
    <property type="match status" value="1"/>
</dbReference>
<dbReference type="Gene3D" id="3.10.20.90">
    <property type="entry name" value="Phosphatidylinositol 3-kinase Catalytic Subunit, Chain A, domain 1"/>
    <property type="match status" value="2"/>
</dbReference>
<dbReference type="Gene3D" id="2.30.29.30">
    <property type="entry name" value="Pleckstrin-homology domain (PH domain)/Phosphotyrosine-binding domain (PTB)"/>
    <property type="match status" value="2"/>
</dbReference>
<dbReference type="InterPro" id="IPR019749">
    <property type="entry name" value="Band_41_domain"/>
</dbReference>
<dbReference type="InterPro" id="IPR035963">
    <property type="entry name" value="FERM_2"/>
</dbReference>
<dbReference type="InterPro" id="IPR019748">
    <property type="entry name" value="FERM_central"/>
</dbReference>
<dbReference type="InterPro" id="IPR037843">
    <property type="entry name" value="Kindlin/fermitin"/>
</dbReference>
<dbReference type="InterPro" id="IPR040790">
    <property type="entry name" value="Kindlin_2_N"/>
</dbReference>
<dbReference type="InterPro" id="IPR011993">
    <property type="entry name" value="PH-like_dom_sf"/>
</dbReference>
<dbReference type="InterPro" id="IPR001849">
    <property type="entry name" value="PH_domain"/>
</dbReference>
<dbReference type="InterPro" id="IPR037837">
    <property type="entry name" value="PH_Kindlin/fermitin"/>
</dbReference>
<dbReference type="PANTHER" id="PTHR16160">
    <property type="entry name" value="FERMITIN 2-RELATED"/>
    <property type="match status" value="1"/>
</dbReference>
<dbReference type="PANTHER" id="PTHR16160:SF12">
    <property type="entry name" value="FERMITIN FAMILY HOMOLOG 1"/>
    <property type="match status" value="1"/>
</dbReference>
<dbReference type="Pfam" id="PF00373">
    <property type="entry name" value="FERM_M"/>
    <property type="match status" value="2"/>
</dbReference>
<dbReference type="Pfam" id="PF18124">
    <property type="entry name" value="Kindlin_2_N"/>
    <property type="match status" value="1"/>
</dbReference>
<dbReference type="Pfam" id="PF00169">
    <property type="entry name" value="PH"/>
    <property type="match status" value="1"/>
</dbReference>
<dbReference type="SMART" id="SM00295">
    <property type="entry name" value="B41"/>
    <property type="match status" value="1"/>
</dbReference>
<dbReference type="SMART" id="SM00233">
    <property type="entry name" value="PH"/>
    <property type="match status" value="1"/>
</dbReference>
<dbReference type="SUPFAM" id="SSF50729">
    <property type="entry name" value="PH domain-like"/>
    <property type="match status" value="2"/>
</dbReference>
<dbReference type="SUPFAM" id="SSF47031">
    <property type="entry name" value="Second domain of FERM"/>
    <property type="match status" value="1"/>
</dbReference>
<dbReference type="PROSITE" id="PS00661">
    <property type="entry name" value="FERM_2"/>
    <property type="match status" value="1"/>
</dbReference>
<dbReference type="PROSITE" id="PS50003">
    <property type="entry name" value="PH_DOMAIN"/>
    <property type="match status" value="1"/>
</dbReference>
<proteinExistence type="evidence at transcript level"/>
<keyword id="KW-0130">Cell adhesion</keyword>
<keyword id="KW-0965">Cell junction</keyword>
<keyword id="KW-1003">Cell membrane</keyword>
<keyword id="KW-0966">Cell projection</keyword>
<keyword id="KW-0963">Cytoplasm</keyword>
<keyword id="KW-0206">Cytoskeleton</keyword>
<keyword id="KW-0472">Membrane</keyword>
<keyword id="KW-0597">Phosphoprotein</keyword>
<keyword id="KW-1185">Reference proteome</keyword>
<gene>
    <name type="primary">FERMT1</name>
    <name type="synonym">KIND1</name>
    <name type="synonym">URP1</name>
</gene>
<reference key="1">
    <citation type="submission" date="2004-11" db="EMBL/GenBank/DDBJ databases">
        <authorList>
            <consortium name="The German cDNA consortium"/>
        </authorList>
    </citation>
    <scope>NUCLEOTIDE SEQUENCE [LARGE SCALE MRNA]</scope>
    <source>
        <tissue>Kidney</tissue>
    </source>
</reference>
<name>FERM1_PONAB</name>
<protein>
    <recommendedName>
        <fullName>Fermitin family homolog 1</fullName>
    </recommendedName>
    <alternativeName>
        <fullName>Kindlin-1</fullName>
    </alternativeName>
    <alternativeName>
        <fullName>Unc-112-related protein 1</fullName>
    </alternativeName>
</protein>
<evidence type="ECO:0000250" key="1"/>
<evidence type="ECO:0000250" key="2">
    <source>
        <dbReference type="UniProtKB" id="Q9BQL6"/>
    </source>
</evidence>
<evidence type="ECO:0000255" key="3">
    <source>
        <dbReference type="PROSITE-ProRule" id="PRU00145"/>
    </source>
</evidence>
<evidence type="ECO:0000305" key="4"/>
<feature type="chain" id="PRO_0000270750" description="Fermitin family homolog 1">
    <location>
        <begin position="1"/>
        <end position="677"/>
    </location>
</feature>
<feature type="domain" description="FERM">
    <location>
        <begin position="96"/>
        <end position="653"/>
    </location>
</feature>
<feature type="domain" description="PH" evidence="3">
    <location>
        <begin position="337"/>
        <end position="433"/>
    </location>
</feature>
<feature type="modified residue" description="Phosphoserine" evidence="2">
    <location>
        <position position="170"/>
    </location>
</feature>
<feature type="modified residue" description="Phosphoserine" evidence="2">
    <location>
        <position position="179"/>
    </location>
</feature>
<feature type="modified residue" description="Phosphoserine" evidence="2">
    <location>
        <position position="361"/>
    </location>
</feature>
<comment type="function">
    <text evidence="1">Involved in cell adhesion. Contributes to integrin activation. When coexpressed with talin, potentiates activation of ITGA2B. Required for normal keratinocyte proliferation. Required for normal polarization of basal keratinocytes in skin, and for normal cell shape. Required for normal adhesion of keratinocytes to fibronectin and laminin, and for normal keratinocyte migration to wound sites (By similarity).</text>
</comment>
<comment type="subunit">
    <text evidence="1">Interacts with the cytoplasmic domain of integrins ITGB1 and ITGB3.</text>
</comment>
<comment type="subcellular location">
    <subcellularLocation>
        <location evidence="1">Cytoplasm</location>
        <location evidence="1">Cytoskeleton</location>
    </subcellularLocation>
    <subcellularLocation>
        <location evidence="1">Cell junction</location>
        <location evidence="1">Focal adhesion</location>
    </subcellularLocation>
    <subcellularLocation>
        <location evidence="1">Cell projection</location>
        <location evidence="1">Ruffle membrane</location>
        <topology evidence="1">Peripheral membrane protein</topology>
        <orientation evidence="1">Cytoplasmic side</orientation>
    </subcellularLocation>
    <text evidence="1">Colocalizes with filamentous actin. Constituent of focal adhesions (By similarity). Localized at the basal aspect of skin keratinocytes, close to the cell membrane (By similarity). Upon TGFB1 treatment, it localizes to membrane ruffles (By similarity).</text>
</comment>
<comment type="domain">
    <text evidence="1">The FERM domain is not correctly detected by PROSITE or Pfam techniques because it contains the insertion of a PH domain. The FERM domain contains the subdomains F1, F2 and F3. It is preceded by a F0 domain with a ubiquitin-like fold. The F0 domain is required for integrin activation and for localization at focal adhesions (By similarity).</text>
</comment>
<comment type="similarity">
    <text evidence="4">Belongs to the kindlin family.</text>
</comment>
<accession>Q5R8M5</accession>
<sequence length="677" mass="77419">MLSSTDFTSASWELVVRVDHPNEEQQKDVTLRVSGDLHVGGVMLQLVEQINISQDWSDFALWWEQKHCWLLKTHWTLDKYGVQADAKLLFTPQHKMLRLRLPNLKMVRLRVSFSAVVFKAVSDICKTLNIRRSEELSLLKPCGDYFKKKKKKDKNNKEPITEDILNLESSPTASVSSVSPGLYSKTMTPIYDPINGTPASSTMTWFSDSPLTEQNCSILAFSQPPQSSEALADMYQPRSLVDKAKLNAGWLDSSRSLMEQGIQEDGQLLLRFKYYSFFDLNPKYDAVRINQLYEQARWAILLEEIDCTEEEMLIFAALQYHISKLSLSAETQDFTSESEVDEIEAALSNLEVTLEGGKADSLLEDITDIPKLADNLKLFRPKKLLLKAFKQYWFVFKDTSIAYFKNKELEQGEPLEKLNLRGCEVVPNVNVAERKFGIKLLIPVADGMNEMYLRCDHENQYAQWMAACMLASKGKTMADSSYRPEVLNILSFLRMKNRNSASQVASSPENMDMNPECFVSPRCAKKHKSKQLAARILEAHQNVAQMPLVEAKLRFIQAWQSLPEFGLTYYLVRFKGSKKDDILGVSYNRLIKIDAATGIPVTTWRFTNIKQWNVSWETRQVVIEFDQNVFTAFTCLSADCKIVHEYIGGYIFLSTRSKDQNETLDEDLFHKLTGGQD</sequence>
<organism>
    <name type="scientific">Pongo abelii</name>
    <name type="common">Sumatran orangutan</name>
    <name type="synonym">Pongo pygmaeus abelii</name>
    <dbReference type="NCBI Taxonomy" id="9601"/>
    <lineage>
        <taxon>Eukaryota</taxon>
        <taxon>Metazoa</taxon>
        <taxon>Chordata</taxon>
        <taxon>Craniata</taxon>
        <taxon>Vertebrata</taxon>
        <taxon>Euteleostomi</taxon>
        <taxon>Mammalia</taxon>
        <taxon>Eutheria</taxon>
        <taxon>Euarchontoglires</taxon>
        <taxon>Primates</taxon>
        <taxon>Haplorrhini</taxon>
        <taxon>Catarrhini</taxon>
        <taxon>Hominidae</taxon>
        <taxon>Pongo</taxon>
    </lineage>
</organism>